<proteinExistence type="inferred from homology"/>
<evidence type="ECO:0000255" key="1">
    <source>
        <dbReference type="HAMAP-Rule" id="MF_01720"/>
    </source>
</evidence>
<keyword id="KW-0046">Antibiotic resistance</keyword>
<keyword id="KW-0067">ATP-binding</keyword>
<keyword id="KW-0997">Cell inner membrane</keyword>
<keyword id="KW-1003">Cell membrane</keyword>
<keyword id="KW-0472">Membrane</keyword>
<keyword id="KW-0547">Nucleotide-binding</keyword>
<keyword id="KW-1278">Translocase</keyword>
<keyword id="KW-0812">Transmembrane</keyword>
<keyword id="KW-1133">Transmembrane helix</keyword>
<keyword id="KW-0813">Transport</keyword>
<feature type="chain" id="PRO_0000280165" description="Macrolide export ATP-binding/permease protein MacB">
    <location>
        <begin position="1"/>
        <end position="641"/>
    </location>
</feature>
<feature type="transmembrane region" description="Helical" evidence="1">
    <location>
        <begin position="265"/>
        <end position="285"/>
    </location>
</feature>
<feature type="transmembrane region" description="Helical" evidence="1">
    <location>
        <begin position="519"/>
        <end position="539"/>
    </location>
</feature>
<feature type="transmembrane region" description="Helical" evidence="1">
    <location>
        <begin position="571"/>
        <end position="591"/>
    </location>
</feature>
<feature type="transmembrane region" description="Helical" evidence="1">
    <location>
        <begin position="604"/>
        <end position="624"/>
    </location>
</feature>
<feature type="domain" description="ABC transporter" evidence="1">
    <location>
        <begin position="2"/>
        <end position="236"/>
    </location>
</feature>
<feature type="binding site" evidence="1">
    <location>
        <begin position="34"/>
        <end position="41"/>
    </location>
    <ligand>
        <name>ATP</name>
        <dbReference type="ChEBI" id="CHEBI:30616"/>
    </ligand>
</feature>
<gene>
    <name evidence="1" type="primary">macB</name>
    <name type="ordered locus">CJJ81176_0636</name>
</gene>
<dbReference type="EC" id="7.6.2.-" evidence="1"/>
<dbReference type="EMBL" id="CP000538">
    <property type="protein sequence ID" value="EAQ73027.1"/>
    <property type="molecule type" value="Genomic_DNA"/>
</dbReference>
<dbReference type="RefSeq" id="WP_002856958.1">
    <property type="nucleotide sequence ID" value="NC_008787.1"/>
</dbReference>
<dbReference type="SMR" id="A1VYW8"/>
<dbReference type="KEGG" id="cjj:CJJ81176_0636"/>
<dbReference type="eggNOG" id="COG0577">
    <property type="taxonomic scope" value="Bacteria"/>
</dbReference>
<dbReference type="eggNOG" id="COG1136">
    <property type="taxonomic scope" value="Bacteria"/>
</dbReference>
<dbReference type="HOGENOM" id="CLU_000604_78_2_7"/>
<dbReference type="Proteomes" id="UP000000646">
    <property type="component" value="Chromosome"/>
</dbReference>
<dbReference type="GO" id="GO:0005886">
    <property type="term" value="C:plasma membrane"/>
    <property type="evidence" value="ECO:0007669"/>
    <property type="project" value="UniProtKB-SubCell"/>
</dbReference>
<dbReference type="GO" id="GO:0005524">
    <property type="term" value="F:ATP binding"/>
    <property type="evidence" value="ECO:0007669"/>
    <property type="project" value="UniProtKB-KW"/>
</dbReference>
<dbReference type="GO" id="GO:0016887">
    <property type="term" value="F:ATP hydrolysis activity"/>
    <property type="evidence" value="ECO:0007669"/>
    <property type="project" value="InterPro"/>
</dbReference>
<dbReference type="GO" id="GO:0022857">
    <property type="term" value="F:transmembrane transporter activity"/>
    <property type="evidence" value="ECO:0007669"/>
    <property type="project" value="TreeGrafter"/>
</dbReference>
<dbReference type="GO" id="GO:0046677">
    <property type="term" value="P:response to antibiotic"/>
    <property type="evidence" value="ECO:0007669"/>
    <property type="project" value="UniProtKB-KW"/>
</dbReference>
<dbReference type="CDD" id="cd03255">
    <property type="entry name" value="ABC_MJ0796_LolCDE_FtsE"/>
    <property type="match status" value="1"/>
</dbReference>
<dbReference type="FunFam" id="3.40.50.300:FF:000032">
    <property type="entry name" value="Export ABC transporter ATP-binding protein"/>
    <property type="match status" value="1"/>
</dbReference>
<dbReference type="Gene3D" id="3.40.50.300">
    <property type="entry name" value="P-loop containing nucleotide triphosphate hydrolases"/>
    <property type="match status" value="1"/>
</dbReference>
<dbReference type="InterPro" id="IPR003593">
    <property type="entry name" value="AAA+_ATPase"/>
</dbReference>
<dbReference type="InterPro" id="IPR003838">
    <property type="entry name" value="ABC3_permease_C"/>
</dbReference>
<dbReference type="InterPro" id="IPR003439">
    <property type="entry name" value="ABC_transporter-like_ATP-bd"/>
</dbReference>
<dbReference type="InterPro" id="IPR017871">
    <property type="entry name" value="ABC_transporter-like_CS"/>
</dbReference>
<dbReference type="InterPro" id="IPR017911">
    <property type="entry name" value="MacB-like_ATP-bd"/>
</dbReference>
<dbReference type="InterPro" id="IPR025857">
    <property type="entry name" value="MacB_PCD"/>
</dbReference>
<dbReference type="InterPro" id="IPR050250">
    <property type="entry name" value="Macrolide_Exporter_MacB"/>
</dbReference>
<dbReference type="InterPro" id="IPR027417">
    <property type="entry name" value="P-loop_NTPase"/>
</dbReference>
<dbReference type="PANTHER" id="PTHR30572:SF14">
    <property type="entry name" value="MACROLIDE EXPORT ATP-BINDING_PERMEASE PROTEIN MACB"/>
    <property type="match status" value="1"/>
</dbReference>
<dbReference type="PANTHER" id="PTHR30572">
    <property type="entry name" value="MEMBRANE COMPONENT OF TRANSPORTER-RELATED"/>
    <property type="match status" value="1"/>
</dbReference>
<dbReference type="Pfam" id="PF00005">
    <property type="entry name" value="ABC_tran"/>
    <property type="match status" value="1"/>
</dbReference>
<dbReference type="Pfam" id="PF02687">
    <property type="entry name" value="FtsX"/>
    <property type="match status" value="1"/>
</dbReference>
<dbReference type="Pfam" id="PF12704">
    <property type="entry name" value="MacB_PCD"/>
    <property type="match status" value="1"/>
</dbReference>
<dbReference type="SMART" id="SM00382">
    <property type="entry name" value="AAA"/>
    <property type="match status" value="1"/>
</dbReference>
<dbReference type="SUPFAM" id="SSF52540">
    <property type="entry name" value="P-loop containing nucleoside triphosphate hydrolases"/>
    <property type="match status" value="1"/>
</dbReference>
<dbReference type="PROSITE" id="PS00211">
    <property type="entry name" value="ABC_TRANSPORTER_1"/>
    <property type="match status" value="1"/>
</dbReference>
<dbReference type="PROSITE" id="PS50893">
    <property type="entry name" value="ABC_TRANSPORTER_2"/>
    <property type="match status" value="1"/>
</dbReference>
<dbReference type="PROSITE" id="PS51267">
    <property type="entry name" value="MACB"/>
    <property type="match status" value="1"/>
</dbReference>
<protein>
    <recommendedName>
        <fullName evidence="1">Macrolide export ATP-binding/permease protein MacB</fullName>
        <ecNumber evidence="1">7.6.2.-</ecNumber>
    </recommendedName>
</protein>
<accession>A1VYW8</accession>
<sequence length="641" mass="70219">MIFLKNICKNIGENAILKNVSLSIEKGEFVAIIGQSGSGKTSLLNIIGTLDTPSSGTYVFDEYEVTKLNNDEKARLRREKIGFIFQRYNLLSLLSAKENVSLPAVYAGKKLQERSQNAKKLLNDLELAHKLDSKPNELSGGQQQRVSIARALMNGGELILADEPTGALDSKSGIMVLEILQKLNAQGHTIVLVTHDPKIAAQAKRVIEIKDGEILSDTKKEKAQEKLTLKTMSKEKKTLTLLKNQAFECFKIAYSSILAHKLRSILTMLGIIIGIASVVCVVALGLGSQAKVLESIARLGTNTIEIRPGRGFGDLRSGKTRLNFSDLETLRSLEYLEAVDAHSNTSGVATYTNISLSARAEGVGVNNFAIEGLRIDAGRILNNDDVKNSTNVAVLDFNAKKNLFPDEKSENILGRVVLFNSQPFKIIGVLQKDTDKPIEDNVVRLYIPYTTLMNKLTGDRNLREIIVKVKDDVSSTLAENAIIRILEIKRGQKDFFTFNSDTFKQAITANKRTTTILTACVAVIALIVGGIGVMNIMLVSVSERTREIGIRMAIGARREDIMMQFLIEAVMICTIGAILGVILSIFVIFAFNTLSTDFPMILNAYSVLLGLLSSMFIGVVFGFFPARNAANLNPISALSKE</sequence>
<name>MACB_CAMJJ</name>
<organism>
    <name type="scientific">Campylobacter jejuni subsp. jejuni serotype O:23/36 (strain 81-176)</name>
    <dbReference type="NCBI Taxonomy" id="354242"/>
    <lineage>
        <taxon>Bacteria</taxon>
        <taxon>Pseudomonadati</taxon>
        <taxon>Campylobacterota</taxon>
        <taxon>Epsilonproteobacteria</taxon>
        <taxon>Campylobacterales</taxon>
        <taxon>Campylobacteraceae</taxon>
        <taxon>Campylobacter</taxon>
    </lineage>
</organism>
<comment type="function">
    <text evidence="1">Non-canonical ABC transporter that contains transmembrane domains (TMD), which form a pore in the inner membrane, and an ATP-binding domain (NBD), which is responsible for energy generation. Confers resistance against macrolides.</text>
</comment>
<comment type="subunit">
    <text evidence="1">Homodimer.</text>
</comment>
<comment type="subcellular location">
    <subcellularLocation>
        <location evidence="1">Cell inner membrane</location>
        <topology evidence="1">Multi-pass membrane protein</topology>
    </subcellularLocation>
</comment>
<comment type="similarity">
    <text evidence="1">Belongs to the ABC transporter superfamily. Macrolide exporter (TC 3.A.1.122) family.</text>
</comment>
<reference key="1">
    <citation type="submission" date="2006-12" db="EMBL/GenBank/DDBJ databases">
        <authorList>
            <person name="Fouts D.E."/>
            <person name="Nelson K.E."/>
            <person name="Sebastian Y."/>
        </authorList>
    </citation>
    <scope>NUCLEOTIDE SEQUENCE [LARGE SCALE GENOMIC DNA]</scope>
    <source>
        <strain>81-176</strain>
    </source>
</reference>